<reference key="1">
    <citation type="journal article" date="2011" name="PLoS Genet.">
        <title>Comparative genomic analysis of human fungal pathogens causing paracoccidioidomycosis.</title>
        <authorList>
            <person name="Desjardins C.A."/>
            <person name="Champion M.D."/>
            <person name="Holder J.W."/>
            <person name="Muszewska A."/>
            <person name="Goldberg J."/>
            <person name="Bailao A.M."/>
            <person name="Brigido M.M."/>
            <person name="Ferreira M.E."/>
            <person name="Garcia A.M."/>
            <person name="Grynberg M."/>
            <person name="Gujja S."/>
            <person name="Heiman D.I."/>
            <person name="Henn M.R."/>
            <person name="Kodira C.D."/>
            <person name="Leon-Narvaez H."/>
            <person name="Longo L.V.G."/>
            <person name="Ma L.-J."/>
            <person name="Malavazi I."/>
            <person name="Matsuo A.L."/>
            <person name="Morais F.V."/>
            <person name="Pereira M."/>
            <person name="Rodriguez-Brito S."/>
            <person name="Sakthikumar S."/>
            <person name="Salem-Izacc S.M."/>
            <person name="Sykes S.M."/>
            <person name="Teixeira M.M."/>
            <person name="Vallejo M.C."/>
            <person name="Walter M.E."/>
            <person name="Yandava C."/>
            <person name="Young S."/>
            <person name="Zeng Q."/>
            <person name="Zucker J."/>
            <person name="Felipe M.S."/>
            <person name="Goldman G.H."/>
            <person name="Haas B.J."/>
            <person name="McEwen J.G."/>
            <person name="Nino-Vega G."/>
            <person name="Puccia R."/>
            <person name="San-Blas G."/>
            <person name="Soares C.M."/>
            <person name="Birren B.W."/>
            <person name="Cuomo C.A."/>
        </authorList>
    </citation>
    <scope>NUCLEOTIDE SEQUENCE [LARGE SCALE GENOMIC DNA]</scope>
    <source>
        <strain>ATCC MYA-826 / Pb01</strain>
    </source>
</reference>
<gene>
    <name type="primary">RTC5</name>
    <name type="ORF">PAAG_03164</name>
</gene>
<proteinExistence type="inferred from homology"/>
<sequence length="689" mass="74644">MGASQSTNGPGQKTTSVEELSKRLAYRFANKCFTPLELTHLKDNFFSRALDQGGIRYWNEEILSEFLGIPDGAGSAAYVTSDGSLDAGPVIFRMVSYLGAFPFQNTMAPSVLTFEAMVKVIVLLTERYGKVLRRGRKDRVKLLYGSLADVGRRDIIVQLQEAAEDSMESVGEAGPGSDRTFTHSTGFSVDKPAHDDDGEEDDDDLALAALESLDAIEIFKHDQRIDKTVYESKISINTFRRLLALLMVTAPLRPLGTISKYTTGLSSSILETVHEQVESILAALALDDLEGGIGYKSFSELISTSLPYLFDPLTPLFEHLLFSKNLDLTRKRHSQSQNDPAAKPVPTPPSTPPSSPPLSPVILNGGFDSSILNPALLSHLSFFLSTSAQIPNIFRNRTRLHPVFSSTEHGESLTSFSHHVMTWQAPSILLIKGAVTSESDEEQITTIGAYLPQPWKQSSSYSSRRSSDVPDQSTLPCLFELSPVHTVLQGSPSLSSLKPNMPVTYFSTKTGIAIGCQIPPPSRKSLGADFLPKPSGGGSLLIDPALEVATLVISDGLNGEGVFLPPGISAHSASKSVSCTTLAASTTSISASNHNTTKSISIYSLEVWGIIPSQSLSAQLDSPGSFVDKQDAITQQRAQWDFEAREAERRKVINMKVGVGELEEHSGRALLEMAGIVGDSQYSGLRHLR</sequence>
<accession>C1GYL0</accession>
<evidence type="ECO:0000250" key="1"/>
<evidence type="ECO:0000255" key="2">
    <source>
        <dbReference type="PROSITE-ProRule" id="PRU01234"/>
    </source>
</evidence>
<evidence type="ECO:0000256" key="3">
    <source>
        <dbReference type="SAM" id="MobiDB-lite"/>
    </source>
</evidence>
<evidence type="ECO:0000305" key="4"/>
<dbReference type="EMBL" id="KN293999">
    <property type="protein sequence ID" value="EEH41601.2"/>
    <property type="status" value="ALT_SEQ"/>
    <property type="molecule type" value="Genomic_DNA"/>
</dbReference>
<dbReference type="RefSeq" id="XP_015702076.1">
    <property type="nucleotide sequence ID" value="XM_015844870.1"/>
</dbReference>
<dbReference type="STRING" id="502779.C1GYL0"/>
<dbReference type="GeneID" id="9097973"/>
<dbReference type="KEGG" id="pbl:PAAG_03164"/>
<dbReference type="eggNOG" id="ENOG502QV3R">
    <property type="taxonomic scope" value="Eukaryota"/>
</dbReference>
<dbReference type="HOGENOM" id="CLU_011918_1_0_1"/>
<dbReference type="OrthoDB" id="289228at2759"/>
<dbReference type="Proteomes" id="UP000002059">
    <property type="component" value="Partially assembled WGS sequence"/>
</dbReference>
<dbReference type="GO" id="GO:0005737">
    <property type="term" value="C:cytoplasm"/>
    <property type="evidence" value="ECO:0007669"/>
    <property type="project" value="UniProtKB-SubCell"/>
</dbReference>
<dbReference type="InterPro" id="IPR006571">
    <property type="entry name" value="TLDc_dom"/>
</dbReference>
<dbReference type="Pfam" id="PF07534">
    <property type="entry name" value="TLD"/>
    <property type="match status" value="1"/>
</dbReference>
<dbReference type="SMART" id="SM00584">
    <property type="entry name" value="TLDc"/>
    <property type="match status" value="1"/>
</dbReference>
<dbReference type="PROSITE" id="PS51886">
    <property type="entry name" value="TLDC"/>
    <property type="match status" value="1"/>
</dbReference>
<name>RTC5_PARBA</name>
<organism>
    <name type="scientific">Paracoccidioides lutzii (strain ATCC MYA-826 / Pb01)</name>
    <name type="common">Paracoccidioides brasiliensis</name>
    <dbReference type="NCBI Taxonomy" id="502779"/>
    <lineage>
        <taxon>Eukaryota</taxon>
        <taxon>Fungi</taxon>
        <taxon>Dikarya</taxon>
        <taxon>Ascomycota</taxon>
        <taxon>Pezizomycotina</taxon>
        <taxon>Eurotiomycetes</taxon>
        <taxon>Eurotiomycetidae</taxon>
        <taxon>Onygenales</taxon>
        <taxon>Ajellomycetaceae</taxon>
        <taxon>Paracoccidioides</taxon>
    </lineage>
</organism>
<comment type="function">
    <text evidence="1">May be involved in a process influencing telomere capping.</text>
</comment>
<comment type="subcellular location">
    <subcellularLocation>
        <location evidence="1">Cytoplasm</location>
    </subcellularLocation>
</comment>
<comment type="similarity">
    <text evidence="4">Belongs to the RTC5 family.</text>
</comment>
<comment type="sequence caution" evidence="4">
    <conflict type="erroneous gene model prediction">
        <sequence resource="EMBL-CDS" id="EEH41601"/>
    </conflict>
</comment>
<protein>
    <recommendedName>
        <fullName>Restriction of telomere capping protein 5</fullName>
    </recommendedName>
</protein>
<feature type="chain" id="PRO_0000408834" description="Restriction of telomere capping protein 5">
    <location>
        <begin position="1"/>
        <end position="689"/>
    </location>
</feature>
<feature type="domain" description="TLDc" evidence="2">
    <location>
        <begin position="370"/>
        <end position="611"/>
    </location>
</feature>
<feature type="region of interest" description="Disordered" evidence="3">
    <location>
        <begin position="166"/>
        <end position="201"/>
    </location>
</feature>
<feature type="region of interest" description="Disordered" evidence="3">
    <location>
        <begin position="332"/>
        <end position="359"/>
    </location>
</feature>
<feature type="compositionally biased region" description="Pro residues" evidence="3">
    <location>
        <begin position="343"/>
        <end position="359"/>
    </location>
</feature>
<keyword id="KW-0963">Cytoplasm</keyword>
<keyword id="KW-1185">Reference proteome</keyword>